<comment type="function">
    <text evidence="1">DEAD-box RNA helicase-like protein required for pre-18S rRNA processing, specifically at sites A0, A1, and A2.</text>
</comment>
<comment type="subunit">
    <text evidence="1">Component of the ribosomal small subunit (SSU) processome composed of at least 40 protein subunits and snoRNA U3.</text>
</comment>
<comment type="subcellular location">
    <subcellularLocation>
        <location evidence="1">Nucleus</location>
        <location evidence="1">Nucleolus</location>
    </subcellularLocation>
</comment>
<comment type="similarity">
    <text evidence="3">Belongs to the UTP25 family.</text>
</comment>
<feature type="chain" id="PRO_0000408128" description="U3 small nucleolar RNA-associated protein 25">
    <location>
        <begin position="1"/>
        <end position="735"/>
    </location>
</feature>
<feature type="region of interest" description="Disordered" evidence="2">
    <location>
        <begin position="1"/>
        <end position="173"/>
    </location>
</feature>
<feature type="compositionally biased region" description="Basic residues" evidence="2">
    <location>
        <begin position="18"/>
        <end position="30"/>
    </location>
</feature>
<feature type="compositionally biased region" description="Basic and acidic residues" evidence="2">
    <location>
        <begin position="38"/>
        <end position="47"/>
    </location>
</feature>
<feature type="compositionally biased region" description="Acidic residues" evidence="2">
    <location>
        <begin position="59"/>
        <end position="69"/>
    </location>
</feature>
<feature type="compositionally biased region" description="Basic and acidic residues" evidence="2">
    <location>
        <begin position="113"/>
        <end position="127"/>
    </location>
</feature>
<feature type="compositionally biased region" description="Acidic residues" evidence="2">
    <location>
        <begin position="138"/>
        <end position="157"/>
    </location>
</feature>
<protein>
    <recommendedName>
        <fullName>U3 small nucleolar RNA-associated protein 25</fullName>
        <shortName>U3 snoRNA-associated protein 25</shortName>
    </recommendedName>
    <alternativeName>
        <fullName>U three protein 25</fullName>
    </alternativeName>
</protein>
<keyword id="KW-0539">Nucleus</keyword>
<keyword id="KW-0687">Ribonucleoprotein</keyword>
<keyword id="KW-0690">Ribosome biogenesis</keyword>
<keyword id="KW-0698">rRNA processing</keyword>
<organism>
    <name type="scientific">Paracoccidioides brasiliensis (strain Pb03)</name>
    <dbReference type="NCBI Taxonomy" id="482561"/>
    <lineage>
        <taxon>Eukaryota</taxon>
        <taxon>Fungi</taxon>
        <taxon>Dikarya</taxon>
        <taxon>Ascomycota</taxon>
        <taxon>Pezizomycotina</taxon>
        <taxon>Eurotiomycetes</taxon>
        <taxon>Eurotiomycetidae</taxon>
        <taxon>Onygenales</taxon>
        <taxon>Ajellomycetaceae</taxon>
        <taxon>Paracoccidioides</taxon>
    </lineage>
</organism>
<accession>C0SG20</accession>
<evidence type="ECO:0000250" key="1"/>
<evidence type="ECO:0000256" key="2">
    <source>
        <dbReference type="SAM" id="MobiDB-lite"/>
    </source>
</evidence>
<evidence type="ECO:0000305" key="3"/>
<gene>
    <name type="primary">UTP25</name>
    <name type="ORF">PABG_06659</name>
</gene>
<reference key="1">
    <citation type="journal article" date="2011" name="PLoS Genet.">
        <title>Comparative genomic analysis of human fungal pathogens causing paracoccidioidomycosis.</title>
        <authorList>
            <person name="Desjardins C.A."/>
            <person name="Champion M.D."/>
            <person name="Holder J.W."/>
            <person name="Muszewska A."/>
            <person name="Goldberg J."/>
            <person name="Bailao A.M."/>
            <person name="Brigido M.M."/>
            <person name="Ferreira M.E."/>
            <person name="Garcia A.M."/>
            <person name="Grynberg M."/>
            <person name="Gujja S."/>
            <person name="Heiman D.I."/>
            <person name="Henn M.R."/>
            <person name="Kodira C.D."/>
            <person name="Leon-Narvaez H."/>
            <person name="Longo L.V.G."/>
            <person name="Ma L.-J."/>
            <person name="Malavazi I."/>
            <person name="Matsuo A.L."/>
            <person name="Morais F.V."/>
            <person name="Pereira M."/>
            <person name="Rodriguez-Brito S."/>
            <person name="Sakthikumar S."/>
            <person name="Salem-Izacc S.M."/>
            <person name="Sykes S.M."/>
            <person name="Teixeira M.M."/>
            <person name="Vallejo M.C."/>
            <person name="Walter M.E."/>
            <person name="Yandava C."/>
            <person name="Young S."/>
            <person name="Zeng Q."/>
            <person name="Zucker J."/>
            <person name="Felipe M.S."/>
            <person name="Goldman G.H."/>
            <person name="Haas B.J."/>
            <person name="McEwen J.G."/>
            <person name="Nino-Vega G."/>
            <person name="Puccia R."/>
            <person name="San-Blas G."/>
            <person name="Soares C.M."/>
            <person name="Birren B.W."/>
            <person name="Cuomo C.A."/>
        </authorList>
    </citation>
    <scope>NUCLEOTIDE SEQUENCE [LARGE SCALE GENOMIC DNA]</scope>
    <source>
        <strain>Pb03</strain>
    </source>
</reference>
<name>UTP25_PARBP</name>
<dbReference type="EMBL" id="KN305543">
    <property type="protein sequence ID" value="EEH16572.1"/>
    <property type="molecule type" value="Genomic_DNA"/>
</dbReference>
<dbReference type="SMR" id="C0SG20"/>
<dbReference type="VEuPathDB" id="FungiDB:PABG_06659"/>
<dbReference type="HOGENOM" id="CLU_018705_0_1_1"/>
<dbReference type="OrthoDB" id="38154at33183"/>
<dbReference type="GO" id="GO:0005730">
    <property type="term" value="C:nucleolus"/>
    <property type="evidence" value="ECO:0007669"/>
    <property type="project" value="UniProtKB-SubCell"/>
</dbReference>
<dbReference type="GO" id="GO:0032040">
    <property type="term" value="C:small-subunit processome"/>
    <property type="evidence" value="ECO:0007669"/>
    <property type="project" value="TreeGrafter"/>
</dbReference>
<dbReference type="GO" id="GO:0019843">
    <property type="term" value="F:rRNA binding"/>
    <property type="evidence" value="ECO:0007669"/>
    <property type="project" value="TreeGrafter"/>
</dbReference>
<dbReference type="GO" id="GO:0034511">
    <property type="term" value="F:U3 snoRNA binding"/>
    <property type="evidence" value="ECO:0007669"/>
    <property type="project" value="InterPro"/>
</dbReference>
<dbReference type="GO" id="GO:0000462">
    <property type="term" value="P:maturation of SSU-rRNA from tricistronic rRNA transcript (SSU-rRNA, 5.8S rRNA, LSU-rRNA)"/>
    <property type="evidence" value="ECO:0007669"/>
    <property type="project" value="TreeGrafter"/>
</dbReference>
<dbReference type="FunFam" id="3.40.50.300:FF:002356">
    <property type="entry name" value="U3 small nucleolar RNA-associated protein 25"/>
    <property type="match status" value="1"/>
</dbReference>
<dbReference type="Gene3D" id="3.40.50.300">
    <property type="entry name" value="P-loop containing nucleotide triphosphate hydrolases"/>
    <property type="match status" value="1"/>
</dbReference>
<dbReference type="InterPro" id="IPR027417">
    <property type="entry name" value="P-loop_NTPase"/>
</dbReference>
<dbReference type="InterPro" id="IPR010678">
    <property type="entry name" value="UTP25"/>
</dbReference>
<dbReference type="InterPro" id="IPR053939">
    <property type="entry name" value="UTP25_C"/>
</dbReference>
<dbReference type="InterPro" id="IPR053940">
    <property type="entry name" value="UTP25_NTPase-like"/>
</dbReference>
<dbReference type="PANTHER" id="PTHR12933">
    <property type="entry name" value="ORF PROTEIN-RELATED"/>
    <property type="match status" value="1"/>
</dbReference>
<dbReference type="PANTHER" id="PTHR12933:SF0">
    <property type="entry name" value="U3 SMALL NUCLEOLAR RNA-ASSOCIATED PROTEIN 25 HOMOLOG"/>
    <property type="match status" value="1"/>
</dbReference>
<dbReference type="Pfam" id="PF06862">
    <property type="entry name" value="Utp25_C"/>
    <property type="match status" value="1"/>
</dbReference>
<dbReference type="Pfam" id="PF22916">
    <property type="entry name" value="UTP25_NTPase-like"/>
    <property type="match status" value="1"/>
</dbReference>
<sequence>MAAGRGRGGSTPFNVRGGRGRGQKGGRGSRRPTFEASRVAEAHHEGSSEDGSVHSGSDLDAEDQLEAPDESSPSSSDDEEDENKTEKPYNTLLQLFNAGQDAGGPARKRRKMDHNSKKVDVEVKGSDESDAEGLLLESEGEESSEGEEMEDMEDMPMDEVRTENSGDENDASDPFEIHFSNVDSTLLSQKIEAISSKGWQSHKSELPGKLRLMASQPNTEGHTIQVLPATQGVDNLKLKQKLANHAGDHISKFDSLASSLVPYMFGYQDLLFGARTLSNSAMFRDLYCLHALNHILKTRDRVLKNNSRLQKEPESDLELRDQGFTRPKVLIILPTRQACVRVMESISKLYQPEQQENKARFHETFSAADDKLWEHKPDDFRELFGGNDDDMFRLGLKFTRKTIKYFSQFYNSDIILASPLGLRMVMDKEDGKKQDFDFLSSIEIAIVDQADALLMQNWEHTEYVFAHLNLQPKESHGCDFSRVRNWYLDDQAKYVRQTLTFSSFITPEINALFSSRMQNTAGKIKATPTYEGAILDIPLPVPVKQTFSRFNSSSPVKDPENRFKYFTSTVLSSLIRSSTGRGGTPRASGTLIFIPSYLDFVRIRNYLATSSQTEHLSFGAISEYTSVRDVARARTHFFSGRHSVLLYTERTHHFRRYHIRGVKRIIMYGVPENPVFWGEVVGFLGLDPAGTAEAAEGGVRAMFSKWDALKMERIVGTKRLGNMLTEKGGDTFSFV</sequence>
<proteinExistence type="inferred from homology"/>